<proteinExistence type="inferred from homology"/>
<reference key="1">
    <citation type="journal article" date="2010" name="Genome Biol.">
        <title>Structure and dynamics of the pan-genome of Streptococcus pneumoniae and closely related species.</title>
        <authorList>
            <person name="Donati C."/>
            <person name="Hiller N.L."/>
            <person name="Tettelin H."/>
            <person name="Muzzi A."/>
            <person name="Croucher N.J."/>
            <person name="Angiuoli S.V."/>
            <person name="Oggioni M."/>
            <person name="Dunning Hotopp J.C."/>
            <person name="Hu F.Z."/>
            <person name="Riley D.R."/>
            <person name="Covacci A."/>
            <person name="Mitchell T.J."/>
            <person name="Bentley S.D."/>
            <person name="Kilian M."/>
            <person name="Ehrlich G.D."/>
            <person name="Rappuoli R."/>
            <person name="Moxon E.R."/>
            <person name="Masignani V."/>
        </authorList>
    </citation>
    <scope>NUCLEOTIDE SEQUENCE [LARGE SCALE GENOMIC DNA]</scope>
    <source>
        <strain>Hungary19A-6</strain>
    </source>
</reference>
<name>SYGB_STRPI</name>
<comment type="catalytic activity">
    <reaction evidence="1">
        <text>tRNA(Gly) + glycine + ATP = glycyl-tRNA(Gly) + AMP + diphosphate</text>
        <dbReference type="Rhea" id="RHEA:16013"/>
        <dbReference type="Rhea" id="RHEA-COMP:9664"/>
        <dbReference type="Rhea" id="RHEA-COMP:9683"/>
        <dbReference type="ChEBI" id="CHEBI:30616"/>
        <dbReference type="ChEBI" id="CHEBI:33019"/>
        <dbReference type="ChEBI" id="CHEBI:57305"/>
        <dbReference type="ChEBI" id="CHEBI:78442"/>
        <dbReference type="ChEBI" id="CHEBI:78522"/>
        <dbReference type="ChEBI" id="CHEBI:456215"/>
        <dbReference type="EC" id="6.1.1.14"/>
    </reaction>
</comment>
<comment type="subunit">
    <text evidence="1">Tetramer of two alpha and two beta subunits.</text>
</comment>
<comment type="subcellular location">
    <subcellularLocation>
        <location evidence="1">Cytoplasm</location>
    </subcellularLocation>
</comment>
<comment type="similarity">
    <text evidence="1">Belongs to the class-II aminoacyl-tRNA synthetase family.</text>
</comment>
<organism>
    <name type="scientific">Streptococcus pneumoniae (strain Hungary19A-6)</name>
    <dbReference type="NCBI Taxonomy" id="487214"/>
    <lineage>
        <taxon>Bacteria</taxon>
        <taxon>Bacillati</taxon>
        <taxon>Bacillota</taxon>
        <taxon>Bacilli</taxon>
        <taxon>Lactobacillales</taxon>
        <taxon>Streptococcaceae</taxon>
        <taxon>Streptococcus</taxon>
    </lineage>
</organism>
<feature type="chain" id="PRO_1000101354" description="Glycine--tRNA ligase beta subunit">
    <location>
        <begin position="1"/>
        <end position="678"/>
    </location>
</feature>
<dbReference type="EC" id="6.1.1.14" evidence="1"/>
<dbReference type="EMBL" id="CP000936">
    <property type="protein sequence ID" value="ACA35991.1"/>
    <property type="molecule type" value="Genomic_DNA"/>
</dbReference>
<dbReference type="RefSeq" id="WP_000164769.1">
    <property type="nucleotide sequence ID" value="NC_010380.1"/>
</dbReference>
<dbReference type="SMR" id="B1ICQ5"/>
<dbReference type="KEGG" id="spv:SPH_1590"/>
<dbReference type="HOGENOM" id="CLU_007220_2_2_9"/>
<dbReference type="Proteomes" id="UP000002163">
    <property type="component" value="Chromosome"/>
</dbReference>
<dbReference type="GO" id="GO:0005829">
    <property type="term" value="C:cytosol"/>
    <property type="evidence" value="ECO:0007669"/>
    <property type="project" value="TreeGrafter"/>
</dbReference>
<dbReference type="GO" id="GO:0004814">
    <property type="term" value="F:arginine-tRNA ligase activity"/>
    <property type="evidence" value="ECO:0007669"/>
    <property type="project" value="InterPro"/>
</dbReference>
<dbReference type="GO" id="GO:0005524">
    <property type="term" value="F:ATP binding"/>
    <property type="evidence" value="ECO:0007669"/>
    <property type="project" value="UniProtKB-UniRule"/>
</dbReference>
<dbReference type="GO" id="GO:0004820">
    <property type="term" value="F:glycine-tRNA ligase activity"/>
    <property type="evidence" value="ECO:0007669"/>
    <property type="project" value="UniProtKB-UniRule"/>
</dbReference>
<dbReference type="GO" id="GO:0006420">
    <property type="term" value="P:arginyl-tRNA aminoacylation"/>
    <property type="evidence" value="ECO:0007669"/>
    <property type="project" value="InterPro"/>
</dbReference>
<dbReference type="GO" id="GO:0006426">
    <property type="term" value="P:glycyl-tRNA aminoacylation"/>
    <property type="evidence" value="ECO:0007669"/>
    <property type="project" value="UniProtKB-UniRule"/>
</dbReference>
<dbReference type="HAMAP" id="MF_00255">
    <property type="entry name" value="Gly_tRNA_synth_beta"/>
    <property type="match status" value="1"/>
</dbReference>
<dbReference type="InterPro" id="IPR008909">
    <property type="entry name" value="DALR_anticod-bd"/>
</dbReference>
<dbReference type="InterPro" id="IPR015944">
    <property type="entry name" value="Gly-tRNA-synth_bsu"/>
</dbReference>
<dbReference type="InterPro" id="IPR006194">
    <property type="entry name" value="Gly-tRNA-synth_heterodimer"/>
</dbReference>
<dbReference type="NCBIfam" id="TIGR00211">
    <property type="entry name" value="glyS"/>
    <property type="match status" value="1"/>
</dbReference>
<dbReference type="PANTHER" id="PTHR30075:SF2">
    <property type="entry name" value="GLYCINE--TRNA LIGASE, CHLOROPLASTIC_MITOCHONDRIAL 2"/>
    <property type="match status" value="1"/>
</dbReference>
<dbReference type="PANTHER" id="PTHR30075">
    <property type="entry name" value="GLYCYL-TRNA SYNTHETASE"/>
    <property type="match status" value="1"/>
</dbReference>
<dbReference type="Pfam" id="PF05746">
    <property type="entry name" value="DALR_1"/>
    <property type="match status" value="1"/>
</dbReference>
<dbReference type="Pfam" id="PF02092">
    <property type="entry name" value="tRNA_synt_2f"/>
    <property type="match status" value="1"/>
</dbReference>
<dbReference type="PRINTS" id="PR01045">
    <property type="entry name" value="TRNASYNTHGB"/>
</dbReference>
<dbReference type="SUPFAM" id="SSF109604">
    <property type="entry name" value="HD-domain/PDEase-like"/>
    <property type="match status" value="1"/>
</dbReference>
<dbReference type="PROSITE" id="PS50861">
    <property type="entry name" value="AA_TRNA_LIGASE_II_GLYAB"/>
    <property type="match status" value="1"/>
</dbReference>
<gene>
    <name evidence="1" type="primary">glyS</name>
    <name type="ordered locus">SPH_1590</name>
</gene>
<evidence type="ECO:0000255" key="1">
    <source>
        <dbReference type="HAMAP-Rule" id="MF_00255"/>
    </source>
</evidence>
<accession>B1ICQ5</accession>
<protein>
    <recommendedName>
        <fullName evidence="1">Glycine--tRNA ligase beta subunit</fullName>
        <ecNumber evidence="1">6.1.1.14</ecNumber>
    </recommendedName>
    <alternativeName>
        <fullName evidence="1">Glycyl-tRNA synthetase beta subunit</fullName>
        <shortName evidence="1">GlyRS</shortName>
    </alternativeName>
</protein>
<sequence length="678" mass="75471">MTKNLLVELGLEELPAYVVTPSEKQLGEKMAAFLKENRLSFEAIQTFSTPRRLAVRVTGLSDKQSDLTEDFKGPAKKIALDSDGNFTKAAQGFVRGKGLTVEDIEFREIKGEEYVYVTKEEVGQSVEAIVPGVVDVLKSLTFPVSMHWAGNSFEYIRPVHTLTVLLDEQEFDLDFLDIKGSRVSRGHRFLGKETKIQSALSYEEDLRKQFVIADPCEREQMIVDQIKEIEAKHGVRIEIDADLLNEVLNLVEYPTAFMGSFDAKYLEVPEEVLVTSMKEHQRYFVVRDQDGKLLPNFISVRNGNAERLKNVIKGNEKVLVARLEDGEFFWREDQKLVISDLVEKLNNVTFHEKIGSLREHMIRTGQITVLLAEKAGLSVDETVDLARAAAIYKFDLLTGMVGEFDELQGIMGEKYTLLAGETPAVAAAIREHYMPTSAEGELPESKVGAVLAIADKLDTILSFFSVGLIPSGSNDPYALRRATQGVVRILDAFGWHIAMDELIDSLYALKFDSLTYENKAEVMDFIKARVDKMMGSTPKDIKEAVLAGSNFVVADMLEAASALVEVSKEEDFKPSVESLSRAFNLAEKAEGVATVDSALFENDQEKALAEAVETLILSGPASQQLKQLFALSPVIDAFFENTMVMAEDQAVRQNRLAILSQLTKKAAKFACFNQINTK</sequence>
<keyword id="KW-0030">Aminoacyl-tRNA synthetase</keyword>
<keyword id="KW-0067">ATP-binding</keyword>
<keyword id="KW-0963">Cytoplasm</keyword>
<keyword id="KW-0436">Ligase</keyword>
<keyword id="KW-0547">Nucleotide-binding</keyword>
<keyword id="KW-0648">Protein biosynthesis</keyword>